<sequence length="252" mass="29599">MFKVVICDDERIIREGLKQIIPWGDYHFNTIYTAKDGVEALSLIQQHQPELVITDIRMPRKNGVDLLNDIAHLDCNVIILSSYDDFEYMKAGIQHHVLDYLLKPVDHAQLEVILGRLVRTLLEQQSQNGRSLASCHDAFQPLLKVEYDDYYVNQIVDQIKQSYQTKVTVSDLIQHIDVSESYAMRTFKDHVGITIVDYLNRYRILQSLQLLDRHYKHYEIADKVGFSEYKMFSYHFKKYLQMSPSDYCKQAK</sequence>
<name>HPTR_STAA8</name>
<feature type="chain" id="PRO_0000299115" description="Transcriptional regulatory protein HptR">
    <location>
        <begin position="1"/>
        <end position="252"/>
    </location>
</feature>
<feature type="domain" description="Response regulatory" evidence="1">
    <location>
        <begin position="3"/>
        <end position="118"/>
    </location>
</feature>
<feature type="domain" description="HTH araC/xylS-type" evidence="2">
    <location>
        <begin position="153"/>
        <end position="250"/>
    </location>
</feature>
<feature type="DNA-binding region" description="H-T-H motif" evidence="2">
    <location>
        <begin position="170"/>
        <end position="191"/>
    </location>
</feature>
<feature type="DNA-binding region" description="H-T-H motif" evidence="2">
    <location>
        <begin position="217"/>
        <end position="240"/>
    </location>
</feature>
<feature type="modified residue" description="4-aspartylphosphate" evidence="1">
    <location>
        <position position="55"/>
    </location>
</feature>
<accession>Q2G1E1</accession>
<protein>
    <recommendedName>
        <fullName>Transcriptional regulatory protein HptR</fullName>
    </recommendedName>
</protein>
<evidence type="ECO:0000255" key="1">
    <source>
        <dbReference type="PROSITE-ProRule" id="PRU00169"/>
    </source>
</evidence>
<evidence type="ECO:0000255" key="2">
    <source>
        <dbReference type="PROSITE-ProRule" id="PRU00593"/>
    </source>
</evidence>
<evidence type="ECO:0000269" key="3">
    <source>
    </source>
</evidence>
<evidence type="ECO:0000269" key="4">
    <source>
    </source>
</evidence>
<evidence type="ECO:0000269" key="5">
    <source>
    </source>
</evidence>
<evidence type="ECO:0000305" key="6"/>
<proteinExistence type="evidence at protein level"/>
<comment type="function">
    <text evidence="3 4 5">Member of the two-component regulatory system HptS/HptR that regulates genes involved in hexose phosphate transport system in response to changes in extracellular phosphate sources (PubMed:25644013). Activates uhpT expression to facilitate glucose-6-phosphate/G6P utilization by directly binding to its promoter (PubMed:26711125). Antagonizes CcpA-dependent transcription of a subset of CcpA-regulated genes involved in antibiotic susceptibility (PubMed:30540769).</text>
</comment>
<comment type="subcellular location">
    <subcellularLocation>
        <location evidence="6">Cytoplasm</location>
    </subcellularLocation>
</comment>
<comment type="PTM">
    <text evidence="4">Phosphorylated by HptS.</text>
</comment>
<comment type="disruption phenotype">
    <text evidence="3 5">Deletion leads to impaired growth when the available carbon source is limited to glucose-6-phosphate (PubMed:25644013). Deletion also alters antibiotic susceptibility (PubMed:30540769).</text>
</comment>
<dbReference type="EMBL" id="CP000253">
    <property type="protein sequence ID" value="ABD29362.1"/>
    <property type="molecule type" value="Genomic_DNA"/>
</dbReference>
<dbReference type="RefSeq" id="WP_000477521.1">
    <property type="nucleotide sequence ID" value="NZ_LS483365.1"/>
</dbReference>
<dbReference type="RefSeq" id="YP_498781.1">
    <property type="nucleotide sequence ID" value="NC_007795.1"/>
</dbReference>
<dbReference type="SMR" id="Q2G1E1"/>
<dbReference type="STRING" id="93061.SAOUHSC_00184"/>
<dbReference type="PaxDb" id="1280-SAXN108_0198"/>
<dbReference type="GeneID" id="3919498"/>
<dbReference type="KEGG" id="sao:SAOUHSC_00184"/>
<dbReference type="PATRIC" id="fig|93061.5.peg.172"/>
<dbReference type="eggNOG" id="COG2207">
    <property type="taxonomic scope" value="Bacteria"/>
</dbReference>
<dbReference type="eggNOG" id="COG4753">
    <property type="taxonomic scope" value="Bacteria"/>
</dbReference>
<dbReference type="HOGENOM" id="CLU_000445_5_1_9"/>
<dbReference type="OrthoDB" id="9780153at2"/>
<dbReference type="PRO" id="PR:Q2G1E1"/>
<dbReference type="Proteomes" id="UP000008816">
    <property type="component" value="Chromosome"/>
</dbReference>
<dbReference type="GO" id="GO:0005737">
    <property type="term" value="C:cytoplasm"/>
    <property type="evidence" value="ECO:0007669"/>
    <property type="project" value="UniProtKB-SubCell"/>
</dbReference>
<dbReference type="GO" id="GO:0003700">
    <property type="term" value="F:DNA-binding transcription factor activity"/>
    <property type="evidence" value="ECO:0007669"/>
    <property type="project" value="InterPro"/>
</dbReference>
<dbReference type="GO" id="GO:0043565">
    <property type="term" value="F:sequence-specific DNA binding"/>
    <property type="evidence" value="ECO:0007669"/>
    <property type="project" value="InterPro"/>
</dbReference>
<dbReference type="GO" id="GO:0000160">
    <property type="term" value="P:phosphorelay signal transduction system"/>
    <property type="evidence" value="ECO:0007669"/>
    <property type="project" value="UniProtKB-KW"/>
</dbReference>
<dbReference type="CDD" id="cd17536">
    <property type="entry name" value="REC_YesN-like"/>
    <property type="match status" value="1"/>
</dbReference>
<dbReference type="Gene3D" id="3.40.50.2300">
    <property type="match status" value="1"/>
</dbReference>
<dbReference type="Gene3D" id="1.10.10.60">
    <property type="entry name" value="Homeodomain-like"/>
    <property type="match status" value="2"/>
</dbReference>
<dbReference type="InterPro" id="IPR011006">
    <property type="entry name" value="CheY-like_superfamily"/>
</dbReference>
<dbReference type="InterPro" id="IPR009057">
    <property type="entry name" value="Homeodomain-like_sf"/>
</dbReference>
<dbReference type="InterPro" id="IPR051552">
    <property type="entry name" value="HptR"/>
</dbReference>
<dbReference type="InterPro" id="IPR018060">
    <property type="entry name" value="HTH_AraC"/>
</dbReference>
<dbReference type="InterPro" id="IPR001789">
    <property type="entry name" value="Sig_transdc_resp-reg_receiver"/>
</dbReference>
<dbReference type="PANTHER" id="PTHR42713">
    <property type="entry name" value="HISTIDINE KINASE-RELATED"/>
    <property type="match status" value="1"/>
</dbReference>
<dbReference type="PANTHER" id="PTHR42713:SF3">
    <property type="entry name" value="TRANSCRIPTIONAL REGULATORY PROTEIN HPTR"/>
    <property type="match status" value="1"/>
</dbReference>
<dbReference type="Pfam" id="PF12833">
    <property type="entry name" value="HTH_18"/>
    <property type="match status" value="1"/>
</dbReference>
<dbReference type="Pfam" id="PF00072">
    <property type="entry name" value="Response_reg"/>
    <property type="match status" value="1"/>
</dbReference>
<dbReference type="SMART" id="SM00342">
    <property type="entry name" value="HTH_ARAC"/>
    <property type="match status" value="1"/>
</dbReference>
<dbReference type="SMART" id="SM00448">
    <property type="entry name" value="REC"/>
    <property type="match status" value="1"/>
</dbReference>
<dbReference type="SUPFAM" id="SSF52172">
    <property type="entry name" value="CheY-like"/>
    <property type="match status" value="1"/>
</dbReference>
<dbReference type="SUPFAM" id="SSF46689">
    <property type="entry name" value="Homeodomain-like"/>
    <property type="match status" value="2"/>
</dbReference>
<dbReference type="PROSITE" id="PS01124">
    <property type="entry name" value="HTH_ARAC_FAMILY_2"/>
    <property type="match status" value="1"/>
</dbReference>
<dbReference type="PROSITE" id="PS50110">
    <property type="entry name" value="RESPONSE_REGULATORY"/>
    <property type="match status" value="1"/>
</dbReference>
<keyword id="KW-0963">Cytoplasm</keyword>
<keyword id="KW-0238">DNA-binding</keyword>
<keyword id="KW-0597">Phosphoprotein</keyword>
<keyword id="KW-1185">Reference proteome</keyword>
<keyword id="KW-0804">Transcription</keyword>
<keyword id="KW-0805">Transcription regulation</keyword>
<keyword id="KW-0902">Two-component regulatory system</keyword>
<organism>
    <name type="scientific">Staphylococcus aureus (strain NCTC 8325 / PS 47)</name>
    <dbReference type="NCBI Taxonomy" id="93061"/>
    <lineage>
        <taxon>Bacteria</taxon>
        <taxon>Bacillati</taxon>
        <taxon>Bacillota</taxon>
        <taxon>Bacilli</taxon>
        <taxon>Bacillales</taxon>
        <taxon>Staphylococcaceae</taxon>
        <taxon>Staphylococcus</taxon>
    </lineage>
</organism>
<reference key="1">
    <citation type="book" date="2006" name="Gram positive pathogens, 2nd edition">
        <title>The Staphylococcus aureus NCTC 8325 genome.</title>
        <editorList>
            <person name="Fischetti V."/>
            <person name="Novick R."/>
            <person name="Ferretti J."/>
            <person name="Portnoy D."/>
            <person name="Rood J."/>
        </editorList>
        <authorList>
            <person name="Gillaspy A.F."/>
            <person name="Worrell V."/>
            <person name="Orvis J."/>
            <person name="Roe B.A."/>
            <person name="Dyer D.W."/>
            <person name="Iandolo J.J."/>
        </authorList>
    </citation>
    <scope>NUCLEOTIDE SEQUENCE [LARGE SCALE GENOMIC DNA]</scope>
    <source>
        <strain>NCTC 8325 / PS 47</strain>
    </source>
</reference>
<reference key="2">
    <citation type="journal article" date="2015" name="Infect. Immun.">
        <title>Characterization of a novel two-component regulatory system, HptRS, the regulator for the hexose phosphate transport system in Staphylococcus aureus.</title>
        <authorList>
            <person name="Park J.Y."/>
            <person name="Kim J.W."/>
            <person name="Moon B.Y."/>
            <person name="Lee J."/>
            <person name="Fortin Y.J."/>
            <person name="Austin F.W."/>
            <person name="Yang S.J."/>
            <person name="Seo K.S."/>
        </authorList>
    </citation>
    <scope>DISRUPTION PHENOTYPE</scope>
    <scope>FUNCTION</scope>
</reference>
<reference key="3">
    <citation type="journal article" date="2016" name="Med. Microbiol. Immunol.">
        <title>Regulatory mechanism of the three-component system HptRSA in glucose-6-phosphate uptake in Staphylococcus aureus.</title>
        <authorList>
            <person name="Yang Y."/>
            <person name="Sun H."/>
            <person name="Liu X."/>
            <person name="Wang M."/>
            <person name="Xue T."/>
            <person name="Sun B."/>
        </authorList>
    </citation>
    <scope>FUNCTION</scope>
    <scope>PHOSPHORYLATION</scope>
</reference>
<reference key="4">
    <citation type="journal article" date="2018" name="PLoS ONE">
        <title>Coordinated regulation of transcription by CcpA and the Staphylococcus aureus two-component system HptRS.</title>
        <authorList>
            <person name="Reed J.M."/>
            <person name="Olson S."/>
            <person name="Brees D.F."/>
            <person name="Griffin C.E."/>
            <person name="Grove R.A."/>
            <person name="Davis P.J."/>
            <person name="Kachman S.D."/>
            <person name="Adamec J."/>
            <person name="Somerville G.A."/>
        </authorList>
    </citation>
    <scope>FUNCTION</scope>
    <scope>DISRUPTION PHENOTYPE</scope>
</reference>
<gene>
    <name type="primary">hptR</name>
    <name type="ordered locus">SAOUHSC_00184</name>
</gene>